<name>DUF6_ARATH</name>
<evidence type="ECO:0000255" key="1"/>
<evidence type="ECO:0000256" key="2">
    <source>
        <dbReference type="SAM" id="MobiDB-lite"/>
    </source>
</evidence>
<evidence type="ECO:0000269" key="3">
    <source>
    </source>
</evidence>
<evidence type="ECO:0000303" key="4">
    <source>
    </source>
</evidence>
<evidence type="ECO:0000305" key="5"/>
<evidence type="ECO:0000305" key="6">
    <source>
    </source>
</evidence>
<evidence type="ECO:0000312" key="7">
    <source>
        <dbReference type="Araport" id="AT2G47230"/>
    </source>
</evidence>
<accession>O22897</accession>
<keyword id="KW-0025">Alternative splicing</keyword>
<keyword id="KW-0175">Coiled coil</keyword>
<keyword id="KW-0341">Growth regulation</keyword>
<keyword id="KW-0539">Nucleus</keyword>
<keyword id="KW-1185">Reference proteome</keyword>
<keyword id="KW-0813">Transport</keyword>
<proteinExistence type="evidence at transcript level"/>
<protein>
    <recommendedName>
        <fullName evidence="5">DUF724 domain-containing protein 6</fullName>
        <shortName evidence="4">AtDUF6</shortName>
    </recommendedName>
</protein>
<dbReference type="EMBL" id="AC002337">
    <property type="protein sequence ID" value="AAB63823.1"/>
    <property type="molecule type" value="Genomic_DNA"/>
</dbReference>
<dbReference type="EMBL" id="CP002685">
    <property type="protein sequence ID" value="AEC10816.1"/>
    <property type="molecule type" value="Genomic_DNA"/>
</dbReference>
<dbReference type="EMBL" id="AK228604">
    <property type="status" value="NOT_ANNOTATED_CDS"/>
    <property type="molecule type" value="mRNA"/>
</dbReference>
<dbReference type="PIR" id="F84912">
    <property type="entry name" value="F84912"/>
</dbReference>
<dbReference type="RefSeq" id="NP_182245.1">
    <molecule id="O22897-1"/>
    <property type="nucleotide sequence ID" value="NM_130291.3"/>
</dbReference>
<dbReference type="SMR" id="O22897"/>
<dbReference type="FunCoup" id="O22897">
    <property type="interactions" value="506"/>
</dbReference>
<dbReference type="STRING" id="3702.O22897"/>
<dbReference type="GlyGen" id="O22897">
    <property type="glycosylation" value="2 sites"/>
</dbReference>
<dbReference type="PaxDb" id="3702-AT2G47230.2"/>
<dbReference type="ProteomicsDB" id="221879">
    <molecule id="O22897-1"/>
</dbReference>
<dbReference type="EnsemblPlants" id="AT2G47230.1">
    <molecule id="O22897-1"/>
    <property type="protein sequence ID" value="AT2G47230.1"/>
    <property type="gene ID" value="AT2G47230"/>
</dbReference>
<dbReference type="GeneID" id="819336"/>
<dbReference type="Gramene" id="AT2G47230.1">
    <molecule id="O22897-1"/>
    <property type="protein sequence ID" value="AT2G47230.1"/>
    <property type="gene ID" value="AT2G47230"/>
</dbReference>
<dbReference type="KEGG" id="ath:AT2G47230"/>
<dbReference type="Araport" id="AT2G47230"/>
<dbReference type="TAIR" id="AT2G47230">
    <property type="gene designation" value="DUF6"/>
</dbReference>
<dbReference type="eggNOG" id="ENOG502QTQX">
    <property type="taxonomic scope" value="Eukaryota"/>
</dbReference>
<dbReference type="HOGENOM" id="CLU_007138_1_0_1"/>
<dbReference type="InParanoid" id="O22897"/>
<dbReference type="OMA" id="HYHATGN"/>
<dbReference type="OrthoDB" id="687110at2759"/>
<dbReference type="PhylomeDB" id="O22897"/>
<dbReference type="PRO" id="PR:O22897"/>
<dbReference type="Proteomes" id="UP000006548">
    <property type="component" value="Chromosome 2"/>
</dbReference>
<dbReference type="ExpressionAtlas" id="O22897">
    <property type="expression patterns" value="baseline and differential"/>
</dbReference>
<dbReference type="GO" id="GO:0005634">
    <property type="term" value="C:nucleus"/>
    <property type="evidence" value="ECO:0000314"/>
    <property type="project" value="UniProtKB"/>
</dbReference>
<dbReference type="CDD" id="cd20405">
    <property type="entry name" value="Tudor_Agenet_AtDUF_rpt1_3"/>
    <property type="match status" value="2"/>
</dbReference>
<dbReference type="CDD" id="cd20406">
    <property type="entry name" value="Tudor_Agenet_AtDUF_rpt2_4"/>
    <property type="match status" value="2"/>
</dbReference>
<dbReference type="InterPro" id="IPR008395">
    <property type="entry name" value="Agenet-like_dom"/>
</dbReference>
<dbReference type="InterPro" id="IPR014002">
    <property type="entry name" value="Agenet_dom_plant"/>
</dbReference>
<dbReference type="InterPro" id="IPR007930">
    <property type="entry name" value="DUF724"/>
</dbReference>
<dbReference type="PANTHER" id="PTHR31917">
    <property type="entry name" value="AGENET DOMAIN-CONTAINING PROTEIN-RELATED"/>
    <property type="match status" value="1"/>
</dbReference>
<dbReference type="PANTHER" id="PTHR31917:SF153">
    <property type="entry name" value="DUF724 DOMAIN-CONTAINING PROTEIN 3-RELATED"/>
    <property type="match status" value="1"/>
</dbReference>
<dbReference type="Pfam" id="PF05641">
    <property type="entry name" value="Agenet"/>
    <property type="match status" value="3"/>
</dbReference>
<dbReference type="Pfam" id="PF05266">
    <property type="entry name" value="DUF724"/>
    <property type="match status" value="1"/>
</dbReference>
<dbReference type="SMART" id="SM00743">
    <property type="entry name" value="Agenet"/>
    <property type="match status" value="4"/>
</dbReference>
<comment type="function">
    <text evidence="6">May be involved in the polar growth of plant cells via transportation of RNAs.</text>
</comment>
<comment type="subcellular location">
    <subcellularLocation>
        <location evidence="3">Nucleus</location>
    </subcellularLocation>
</comment>
<comment type="alternative products">
    <event type="alternative splicing"/>
    <isoform>
        <id>O22897-1</id>
        <name>1</name>
        <sequence type="displayed"/>
    </isoform>
    <text evidence="5">A number of isoforms are produced. According to EST sequences.</text>
</comment>
<comment type="tissue specificity">
    <text evidence="3">Expressed in roots, stems and flowers.</text>
</comment>
<comment type="sequence caution" evidence="5">
    <conflict type="miscellaneous discrepancy">
        <sequence resource="EMBL" id="AK228604"/>
    </conflict>
    <text>Sequencing errors.</text>
</comment>
<organism>
    <name type="scientific">Arabidopsis thaliana</name>
    <name type="common">Mouse-ear cress</name>
    <dbReference type="NCBI Taxonomy" id="3702"/>
    <lineage>
        <taxon>Eukaryota</taxon>
        <taxon>Viridiplantae</taxon>
        <taxon>Streptophyta</taxon>
        <taxon>Embryophyta</taxon>
        <taxon>Tracheophyta</taxon>
        <taxon>Spermatophyta</taxon>
        <taxon>Magnoliopsida</taxon>
        <taxon>eudicotyledons</taxon>
        <taxon>Gunneridae</taxon>
        <taxon>Pentapetalae</taxon>
        <taxon>rosids</taxon>
        <taxon>malvids</taxon>
        <taxon>Brassicales</taxon>
        <taxon>Brassicaceae</taxon>
        <taxon>Camelineae</taxon>
        <taxon>Arabidopsis</taxon>
    </lineage>
</organism>
<sequence length="701" mass="79607">MEETIRKGSEVEVSSTEEGFADAWFRGILQENPTKSGRKKLRVRYLTLLNDDALSPLIENIEPRFIRPVPPENEYNGIVLEEGTVVDADHKDGWWTGVIIKKLENGKFWVYYDSPPDIIEFERNQLRPHLRWSGWKWLRPDIQELDKSMFSSGTMAEVSTIVDKAEVAWFPAMIIKEIEVDGEKKFIVKDCNKHLSFSGDEARTNSTIDSSRVRPTPPPFPVEKYELMDRVEVFRGSVWRQGLVRGVLDHNCYMVCLVVTKEEPVVKHSDLRPCKVWEDGVWQDGPKQTPVIETPSNVMKTKPMRSCSGAKSMTPKRTTKHARRSLNLEKSAETLTKAESRAATGELRSKRANDVINDNTPLVITPQVKPIASVEPVTPSRVRTATPLKQTKADTQGKSSPKKTLEPMRDENGLENSTRQKVLEEKNSEKKGRKRKRQEEHNSDLKETDESCNGQMAEINDTSSICNDVDDQPLAAWINLPTETSIDHSPIVVNNAAIATDVEERQANDTLMILPFAKKSPFWKMYETQEVCKIAPQSPHFSPLFEAKEELREWTAVGMMVSFYGLLEEVKNLQLDVSPSTLGSLSCSFAELEKHGFDVAAPQSRINKMLSLQDERAKKAEERKGLEKKIEAGEIEGHTYEEEMAELELKILELKRQQVVAKEMKEATDKVTSGMKSYAEMINQEIEDLRLEFQSTASAPW</sequence>
<gene>
    <name evidence="4" type="primary">DUF6</name>
    <name evidence="7" type="ordered locus">At2g47230</name>
</gene>
<feature type="chain" id="PRO_0000436424" description="DUF724 domain-containing protein 6">
    <location>
        <begin position="1"/>
        <end position="701"/>
    </location>
</feature>
<feature type="domain" description="DUF724" evidence="1">
    <location>
        <begin position="514"/>
        <end position="700"/>
    </location>
</feature>
<feature type="region of interest" description="Disordered" evidence="2">
    <location>
        <begin position="299"/>
        <end position="353"/>
    </location>
</feature>
<feature type="region of interest" description="Disordered" evidence="2">
    <location>
        <begin position="374"/>
        <end position="452"/>
    </location>
</feature>
<feature type="coiled-coil region" evidence="1">
    <location>
        <begin position="626"/>
        <end position="670"/>
    </location>
</feature>
<feature type="compositionally biased region" description="Basic and acidic residues" evidence="2">
    <location>
        <begin position="326"/>
        <end position="340"/>
    </location>
</feature>
<feature type="compositionally biased region" description="Polar residues" evidence="2">
    <location>
        <begin position="381"/>
        <end position="399"/>
    </location>
</feature>
<feature type="compositionally biased region" description="Basic and acidic residues" evidence="2">
    <location>
        <begin position="403"/>
        <end position="412"/>
    </location>
</feature>
<feature type="compositionally biased region" description="Basic and acidic residues" evidence="2">
    <location>
        <begin position="421"/>
        <end position="430"/>
    </location>
</feature>
<feature type="compositionally biased region" description="Basic and acidic residues" evidence="2">
    <location>
        <begin position="437"/>
        <end position="449"/>
    </location>
</feature>
<reference key="1">
    <citation type="journal article" date="1999" name="Nature">
        <title>Sequence and analysis of chromosome 2 of the plant Arabidopsis thaliana.</title>
        <authorList>
            <person name="Lin X."/>
            <person name="Kaul S."/>
            <person name="Rounsley S.D."/>
            <person name="Shea T.P."/>
            <person name="Benito M.-I."/>
            <person name="Town C.D."/>
            <person name="Fujii C.Y."/>
            <person name="Mason T.M."/>
            <person name="Bowman C.L."/>
            <person name="Barnstead M.E."/>
            <person name="Feldblyum T.V."/>
            <person name="Buell C.R."/>
            <person name="Ketchum K.A."/>
            <person name="Lee J.J."/>
            <person name="Ronning C.M."/>
            <person name="Koo H.L."/>
            <person name="Moffat K.S."/>
            <person name="Cronin L.A."/>
            <person name="Shen M."/>
            <person name="Pai G."/>
            <person name="Van Aken S."/>
            <person name="Umayam L."/>
            <person name="Tallon L.J."/>
            <person name="Gill J.E."/>
            <person name="Adams M.D."/>
            <person name="Carrera A.J."/>
            <person name="Creasy T.H."/>
            <person name="Goodman H.M."/>
            <person name="Somerville C.R."/>
            <person name="Copenhaver G.P."/>
            <person name="Preuss D."/>
            <person name="Nierman W.C."/>
            <person name="White O."/>
            <person name="Eisen J.A."/>
            <person name="Salzberg S.L."/>
            <person name="Fraser C.M."/>
            <person name="Venter J.C."/>
        </authorList>
    </citation>
    <scope>NUCLEOTIDE SEQUENCE [LARGE SCALE GENOMIC DNA]</scope>
    <source>
        <strain>cv. Columbia</strain>
    </source>
</reference>
<reference key="2">
    <citation type="journal article" date="2017" name="Plant J.">
        <title>Araport11: a complete reannotation of the Arabidopsis thaliana reference genome.</title>
        <authorList>
            <person name="Cheng C.Y."/>
            <person name="Krishnakumar V."/>
            <person name="Chan A.P."/>
            <person name="Thibaud-Nissen F."/>
            <person name="Schobel S."/>
            <person name="Town C.D."/>
        </authorList>
    </citation>
    <scope>GENOME REANNOTATION</scope>
    <source>
        <strain>cv. Columbia</strain>
    </source>
</reference>
<reference key="3">
    <citation type="submission" date="2006-07" db="EMBL/GenBank/DDBJ databases">
        <title>Large-scale analysis of RIKEN Arabidopsis full-length (RAFL) cDNAs.</title>
        <authorList>
            <person name="Totoki Y."/>
            <person name="Seki M."/>
            <person name="Ishida J."/>
            <person name="Nakajima M."/>
            <person name="Enju A."/>
            <person name="Kamiya A."/>
            <person name="Narusaka M."/>
            <person name="Shin-i T."/>
            <person name="Nakagawa M."/>
            <person name="Sakamoto N."/>
            <person name="Oishi K."/>
            <person name="Kohara Y."/>
            <person name="Kobayashi M."/>
            <person name="Toyoda A."/>
            <person name="Sakaki Y."/>
            <person name="Sakurai T."/>
            <person name="Iida K."/>
            <person name="Akiyama K."/>
            <person name="Satou M."/>
            <person name="Toyoda T."/>
            <person name="Konagaya A."/>
            <person name="Carninci P."/>
            <person name="Kawai J."/>
            <person name="Hayashizaki Y."/>
            <person name="Shinozaki K."/>
        </authorList>
    </citation>
    <scope>NUCLEOTIDE SEQUENCE [LARGE SCALE MRNA]</scope>
    <source>
        <strain>cv. Columbia</strain>
    </source>
</reference>
<reference key="4">
    <citation type="journal article" date="2010" name="Plant Mol. Biol.">
        <title>Characterization of DUF724 gene family in Arabidopsis thaliana.</title>
        <authorList>
            <person name="Cao X."/>
            <person name="Yang K.Z."/>
            <person name="Xia C."/>
            <person name="Zhang X.Q."/>
            <person name="Chen L.Q."/>
            <person name="Ye D."/>
        </authorList>
    </citation>
    <scope>FUNCTION</scope>
    <scope>GENE FAMILY</scope>
    <scope>NOMENCLATURE</scope>
    <scope>SUBCELLULAR LOCATION</scope>
    <scope>TISSUE SPECIFICITY</scope>
</reference>